<name>Y116_MYCGE</name>
<protein>
    <recommendedName>
        <fullName>Uncharacterized protein MG116</fullName>
    </recommendedName>
</protein>
<accession>P47362</accession>
<dbReference type="EMBL" id="L43967">
    <property type="protein sequence ID" value="AAC71334.1"/>
    <property type="molecule type" value="Genomic_DNA"/>
</dbReference>
<dbReference type="EMBL" id="U02127">
    <property type="protein sequence ID" value="AAD12404.1"/>
    <property type="molecule type" value="Genomic_DNA"/>
</dbReference>
<dbReference type="PIR" id="H64212">
    <property type="entry name" value="H64212"/>
</dbReference>
<dbReference type="RefSeq" id="WP_010869338.1">
    <property type="nucleotide sequence ID" value="NC_000908.2"/>
</dbReference>
<dbReference type="SMR" id="P47362"/>
<dbReference type="STRING" id="243273.MG_116"/>
<dbReference type="GeneID" id="88282240"/>
<dbReference type="KEGG" id="mge:MG_116"/>
<dbReference type="eggNOG" id="COG1211">
    <property type="taxonomic scope" value="Bacteria"/>
</dbReference>
<dbReference type="HOGENOM" id="CLU_1106195_0_0_14"/>
<dbReference type="InParanoid" id="P47362"/>
<dbReference type="OrthoDB" id="9806837at2"/>
<dbReference type="BioCyc" id="MGEN243273:G1GJ2-129-MONOMER"/>
<dbReference type="Proteomes" id="UP000000807">
    <property type="component" value="Chromosome"/>
</dbReference>
<dbReference type="Gene3D" id="3.90.550.10">
    <property type="entry name" value="Spore Coat Polysaccharide Biosynthesis Protein SpsA, Chain A"/>
    <property type="match status" value="1"/>
</dbReference>
<dbReference type="InterPro" id="IPR029044">
    <property type="entry name" value="Nucleotide-diphossugar_trans"/>
</dbReference>
<organism>
    <name type="scientific">Mycoplasma genitalium (strain ATCC 33530 / DSM 19775 / NCTC 10195 / G37)</name>
    <name type="common">Mycoplasmoides genitalium</name>
    <dbReference type="NCBI Taxonomy" id="243273"/>
    <lineage>
        <taxon>Bacteria</taxon>
        <taxon>Bacillati</taxon>
        <taxon>Mycoplasmatota</taxon>
        <taxon>Mycoplasmoidales</taxon>
        <taxon>Mycoplasmoidaceae</taxon>
        <taxon>Mycoplasmoides</taxon>
    </lineage>
</organism>
<keyword id="KW-1185">Reference proteome</keyword>
<sequence>MKRTLNIGIVLCENFLSDQQNAVDSYTQVYEDVRMFEFGLKLFQSLPFNIQETLIFCNAEQHKIVDKAAKKYKNTTVFFSRDTDVANVYEAKVFIQEKYKLTQDYKKRGVSSYYDSCCFILIEANRPLTAIKTVKSVYEKALIEKAAIAVLPYNGTLMNGNNDVVFSHLQDKNRFNYWKQSKAYEVQYPQAYTLNKLNQFSKQQFLRARSMLDLMKISNKSPLSIVDGSAYAFRVVTNLDFEILLGILKNG</sequence>
<reference key="1">
    <citation type="journal article" date="1995" name="Science">
        <title>The minimal gene complement of Mycoplasma genitalium.</title>
        <authorList>
            <person name="Fraser C.M."/>
            <person name="Gocayne J.D."/>
            <person name="White O."/>
            <person name="Adams M.D."/>
            <person name="Clayton R.A."/>
            <person name="Fleischmann R.D."/>
            <person name="Bult C.J."/>
            <person name="Kerlavage A.R."/>
            <person name="Sutton G.G."/>
            <person name="Kelley J.M."/>
            <person name="Fritchman J.L."/>
            <person name="Weidman J.F."/>
            <person name="Small K.V."/>
            <person name="Sandusky M."/>
            <person name="Fuhrmann J.L."/>
            <person name="Nguyen D.T."/>
            <person name="Utterback T.R."/>
            <person name="Saudek D.M."/>
            <person name="Phillips C.A."/>
            <person name="Merrick J.M."/>
            <person name="Tomb J.-F."/>
            <person name="Dougherty B.A."/>
            <person name="Bott K.F."/>
            <person name="Hu P.-C."/>
            <person name="Lucier T.S."/>
            <person name="Peterson S.N."/>
            <person name="Smith H.O."/>
            <person name="Hutchison C.A. III"/>
            <person name="Venter J.C."/>
        </authorList>
    </citation>
    <scope>NUCLEOTIDE SEQUENCE [LARGE SCALE GENOMIC DNA]</scope>
    <source>
        <strain>ATCC 33530 / DSM 19775 / NCTC 10195 / G37</strain>
    </source>
</reference>
<reference key="2">
    <citation type="journal article" date="1993" name="J. Bacteriol.">
        <title>A survey of the Mycoplasma genitalium genome by using random sequencing.</title>
        <authorList>
            <person name="Peterson S.N."/>
            <person name="Hu P.-C."/>
            <person name="Bott K.F."/>
            <person name="Hutchison C.A. III"/>
        </authorList>
    </citation>
    <scope>NUCLEOTIDE SEQUENCE [GENOMIC DNA] OF 1-61</scope>
    <source>
        <strain>ATCC 33530 / DSM 19775 / NCTC 10195 / G37</strain>
    </source>
</reference>
<gene>
    <name type="ordered locus">MG116</name>
</gene>
<feature type="chain" id="PRO_0000210419" description="Uncharacterized protein MG116">
    <location>
        <begin position="1"/>
        <end position="251"/>
    </location>
</feature>
<proteinExistence type="predicted"/>